<organism>
    <name type="scientific">Janthinobacterium sp. (strain Marseille)</name>
    <name type="common">Minibacterium massiliensis</name>
    <dbReference type="NCBI Taxonomy" id="375286"/>
    <lineage>
        <taxon>Bacteria</taxon>
        <taxon>Pseudomonadati</taxon>
        <taxon>Pseudomonadota</taxon>
        <taxon>Betaproteobacteria</taxon>
        <taxon>Burkholderiales</taxon>
        <taxon>Oxalobacteraceae</taxon>
        <taxon>Janthinobacterium</taxon>
    </lineage>
</organism>
<dbReference type="EC" id="2.3.1.191" evidence="1"/>
<dbReference type="EMBL" id="CP000269">
    <property type="protein sequence ID" value="ABR88639.1"/>
    <property type="molecule type" value="Genomic_DNA"/>
</dbReference>
<dbReference type="RefSeq" id="WP_012079901.1">
    <property type="nucleotide sequence ID" value="NC_009659.1"/>
</dbReference>
<dbReference type="SMR" id="A6SZP1"/>
<dbReference type="STRING" id="375286.mma_2048"/>
<dbReference type="KEGG" id="mms:mma_2048"/>
<dbReference type="eggNOG" id="COG1044">
    <property type="taxonomic scope" value="Bacteria"/>
</dbReference>
<dbReference type="HOGENOM" id="CLU_049865_0_1_4"/>
<dbReference type="OrthoDB" id="9784739at2"/>
<dbReference type="UniPathway" id="UPA00973"/>
<dbReference type="Proteomes" id="UP000006388">
    <property type="component" value="Chromosome"/>
</dbReference>
<dbReference type="GO" id="GO:0016020">
    <property type="term" value="C:membrane"/>
    <property type="evidence" value="ECO:0007669"/>
    <property type="project" value="GOC"/>
</dbReference>
<dbReference type="GO" id="GO:0016410">
    <property type="term" value="F:N-acyltransferase activity"/>
    <property type="evidence" value="ECO:0007669"/>
    <property type="project" value="InterPro"/>
</dbReference>
<dbReference type="GO" id="GO:0009245">
    <property type="term" value="P:lipid A biosynthetic process"/>
    <property type="evidence" value="ECO:0007669"/>
    <property type="project" value="UniProtKB-UniRule"/>
</dbReference>
<dbReference type="CDD" id="cd03352">
    <property type="entry name" value="LbH_LpxD"/>
    <property type="match status" value="1"/>
</dbReference>
<dbReference type="Gene3D" id="2.160.10.10">
    <property type="entry name" value="Hexapeptide repeat proteins"/>
    <property type="match status" value="1"/>
</dbReference>
<dbReference type="Gene3D" id="3.40.1390.10">
    <property type="entry name" value="MurE/MurF, N-terminal domain"/>
    <property type="match status" value="1"/>
</dbReference>
<dbReference type="HAMAP" id="MF_00523">
    <property type="entry name" value="LpxD"/>
    <property type="match status" value="1"/>
</dbReference>
<dbReference type="InterPro" id="IPR001451">
    <property type="entry name" value="Hexapep"/>
</dbReference>
<dbReference type="InterPro" id="IPR007691">
    <property type="entry name" value="LpxD"/>
</dbReference>
<dbReference type="InterPro" id="IPR011004">
    <property type="entry name" value="Trimer_LpxA-like_sf"/>
</dbReference>
<dbReference type="InterPro" id="IPR020573">
    <property type="entry name" value="UDP_GlcNAc_AcTrfase_non-rep"/>
</dbReference>
<dbReference type="NCBIfam" id="TIGR01853">
    <property type="entry name" value="lipid_A_lpxD"/>
    <property type="match status" value="1"/>
</dbReference>
<dbReference type="NCBIfam" id="NF002060">
    <property type="entry name" value="PRK00892.1"/>
    <property type="match status" value="1"/>
</dbReference>
<dbReference type="PANTHER" id="PTHR43378">
    <property type="entry name" value="UDP-3-O-ACYLGLUCOSAMINE N-ACYLTRANSFERASE"/>
    <property type="match status" value="1"/>
</dbReference>
<dbReference type="PANTHER" id="PTHR43378:SF2">
    <property type="entry name" value="UDP-3-O-ACYLGLUCOSAMINE N-ACYLTRANSFERASE 1, MITOCHONDRIAL-RELATED"/>
    <property type="match status" value="1"/>
</dbReference>
<dbReference type="Pfam" id="PF14602">
    <property type="entry name" value="Hexapep_2"/>
    <property type="match status" value="2"/>
</dbReference>
<dbReference type="Pfam" id="PF04613">
    <property type="entry name" value="LpxD"/>
    <property type="match status" value="1"/>
</dbReference>
<dbReference type="SUPFAM" id="SSF51161">
    <property type="entry name" value="Trimeric LpxA-like enzymes"/>
    <property type="match status" value="1"/>
</dbReference>
<protein>
    <recommendedName>
        <fullName evidence="1">UDP-3-O-acylglucosamine N-acyltransferase</fullName>
        <ecNumber evidence="1">2.3.1.191</ecNumber>
    </recommendedName>
</protein>
<name>LPXD_JANMA</name>
<accession>A6SZP1</accession>
<comment type="function">
    <text evidence="1">Catalyzes the N-acylation of UDP-3-O-acylglucosamine using 3-hydroxyacyl-ACP as the acyl donor. Is involved in the biosynthesis of lipid A, a phosphorylated glycolipid that anchors the lipopolysaccharide to the outer membrane of the cell.</text>
</comment>
<comment type="catalytic activity">
    <reaction evidence="1">
        <text>a UDP-3-O-[(3R)-3-hydroxyacyl]-alpha-D-glucosamine + a (3R)-hydroxyacyl-[ACP] = a UDP-2-N,3-O-bis[(3R)-3-hydroxyacyl]-alpha-D-glucosamine + holo-[ACP] + H(+)</text>
        <dbReference type="Rhea" id="RHEA:53836"/>
        <dbReference type="Rhea" id="RHEA-COMP:9685"/>
        <dbReference type="Rhea" id="RHEA-COMP:9945"/>
        <dbReference type="ChEBI" id="CHEBI:15378"/>
        <dbReference type="ChEBI" id="CHEBI:64479"/>
        <dbReference type="ChEBI" id="CHEBI:78827"/>
        <dbReference type="ChEBI" id="CHEBI:137740"/>
        <dbReference type="ChEBI" id="CHEBI:137748"/>
        <dbReference type="EC" id="2.3.1.191"/>
    </reaction>
</comment>
<comment type="pathway">
    <text evidence="1">Bacterial outer membrane biogenesis; LPS lipid A biosynthesis.</text>
</comment>
<comment type="subunit">
    <text evidence="1">Homotrimer.</text>
</comment>
<comment type="similarity">
    <text evidence="1">Belongs to the transferase hexapeptide repeat family. LpxD subfamily.</text>
</comment>
<sequence length="350" mass="36326">MSTRLGELVERLGGRLIGDADIEVVGIAPLNDADASHITFLSNPKFRGQAAQTHAAALILSAADDEVVAADYQGARIVTANPYAYFARAAQFFAALHAHIAPAGIHPSASVDPTAQIAASASIGPFVAVEAGAVIEDGCVIDAGCFIGRDARVGSGTHFYPRVTFLAGCRIGARGIIHSGAVIGADGFGFANEGGVYIKIPQTGAVRIGDDVEIGANTSIDRGALADTVLEDGVKLDNQIQIGHNCHIGAHTAMAGCVGVAGSAIIGKYCTFGGAAMVLGHLTIADHVHISSGSMVSRSIREPGQYTGFYPLAKNAEWEKSAVIVRNLATMREKIRELEKTIKSLGDKPE</sequence>
<feature type="chain" id="PRO_1000050944" description="UDP-3-O-acylglucosamine N-acyltransferase">
    <location>
        <begin position="1"/>
        <end position="350"/>
    </location>
</feature>
<feature type="active site" description="Proton acceptor" evidence="1">
    <location>
        <position position="244"/>
    </location>
</feature>
<evidence type="ECO:0000255" key="1">
    <source>
        <dbReference type="HAMAP-Rule" id="MF_00523"/>
    </source>
</evidence>
<reference key="1">
    <citation type="journal article" date="2007" name="PLoS Genet.">
        <title>Genome analysis of Minibacterium massiliensis highlights the convergent evolution of water-living bacteria.</title>
        <authorList>
            <person name="Audic S."/>
            <person name="Robert C."/>
            <person name="Campagna B."/>
            <person name="Parinello H."/>
            <person name="Claverie J.-M."/>
            <person name="Raoult D."/>
            <person name="Drancourt M."/>
        </authorList>
    </citation>
    <scope>NUCLEOTIDE SEQUENCE [LARGE SCALE GENOMIC DNA]</scope>
    <source>
        <strain>Marseille</strain>
    </source>
</reference>
<gene>
    <name evidence="1" type="primary">lpxD</name>
    <name type="ordered locus">mma_2048</name>
</gene>
<keyword id="KW-0012">Acyltransferase</keyword>
<keyword id="KW-0441">Lipid A biosynthesis</keyword>
<keyword id="KW-0444">Lipid biosynthesis</keyword>
<keyword id="KW-0443">Lipid metabolism</keyword>
<keyword id="KW-0677">Repeat</keyword>
<keyword id="KW-0808">Transferase</keyword>
<proteinExistence type="inferred from homology"/>